<feature type="chain" id="PRO_0000184925" description="3-methyl-2-oxobutanoate hydroxymethyltransferase">
    <location>
        <begin position="1"/>
        <end position="349"/>
    </location>
</feature>
<organism>
    <name type="scientific">Emericella nidulans (strain FGSC A4 / ATCC 38163 / CBS 112.46 / NRRL 194 / M139)</name>
    <name type="common">Aspergillus nidulans</name>
    <dbReference type="NCBI Taxonomy" id="227321"/>
    <lineage>
        <taxon>Eukaryota</taxon>
        <taxon>Fungi</taxon>
        <taxon>Dikarya</taxon>
        <taxon>Ascomycota</taxon>
        <taxon>Pezizomycotina</taxon>
        <taxon>Eurotiomycetes</taxon>
        <taxon>Eurotiomycetidae</taxon>
        <taxon>Eurotiales</taxon>
        <taxon>Aspergillaceae</taxon>
        <taxon>Aspergillus</taxon>
        <taxon>Aspergillus subgen. Nidulantes</taxon>
    </lineage>
</organism>
<gene>
    <name type="primary">panB</name>
    <name type="ORF">AN1778</name>
</gene>
<proteinExistence type="evidence at protein level"/>
<reference key="1">
    <citation type="journal article" date="1999" name="Mol. Gen. Genet.">
        <title>The Aspergillus nidulans panB gene encodes ketopantoate hydroxymethyltransferase, required for biosynthesis of pantothenate and Coenzyme A.</title>
        <authorList>
            <person name="Kurtov D."/>
            <person name="Kinghorn J.R."/>
            <person name="Unkles S.E."/>
        </authorList>
    </citation>
    <scope>NUCLEOTIDE SEQUENCE [GENOMIC DNA]</scope>
    <scope>CATALYTIC ACTIVITY</scope>
</reference>
<reference key="2">
    <citation type="journal article" date="2005" name="Nature">
        <title>Sequencing of Aspergillus nidulans and comparative analysis with A. fumigatus and A. oryzae.</title>
        <authorList>
            <person name="Galagan J.E."/>
            <person name="Calvo S.E."/>
            <person name="Cuomo C."/>
            <person name="Ma L.-J."/>
            <person name="Wortman J.R."/>
            <person name="Batzoglou S."/>
            <person name="Lee S.-I."/>
            <person name="Bastuerkmen M."/>
            <person name="Spevak C.C."/>
            <person name="Clutterbuck J."/>
            <person name="Kapitonov V."/>
            <person name="Jurka J."/>
            <person name="Scazzocchio C."/>
            <person name="Farman M.L."/>
            <person name="Butler J."/>
            <person name="Purcell S."/>
            <person name="Harris S."/>
            <person name="Braus G.H."/>
            <person name="Draht O."/>
            <person name="Busch S."/>
            <person name="D'Enfert C."/>
            <person name="Bouchier C."/>
            <person name="Goldman G.H."/>
            <person name="Bell-Pedersen D."/>
            <person name="Griffiths-Jones S."/>
            <person name="Doonan J.H."/>
            <person name="Yu J."/>
            <person name="Vienken K."/>
            <person name="Pain A."/>
            <person name="Freitag M."/>
            <person name="Selker E.U."/>
            <person name="Archer D.B."/>
            <person name="Penalva M.A."/>
            <person name="Oakley B.R."/>
            <person name="Momany M."/>
            <person name="Tanaka T."/>
            <person name="Kumagai T."/>
            <person name="Asai K."/>
            <person name="Machida M."/>
            <person name="Nierman W.C."/>
            <person name="Denning D.W."/>
            <person name="Caddick M.X."/>
            <person name="Hynes M."/>
            <person name="Paoletti M."/>
            <person name="Fischer R."/>
            <person name="Miller B.L."/>
            <person name="Dyer P.S."/>
            <person name="Sachs M.S."/>
            <person name="Osmani S.A."/>
            <person name="Birren B.W."/>
        </authorList>
    </citation>
    <scope>NUCLEOTIDE SEQUENCE [LARGE SCALE GENOMIC DNA]</scope>
    <source>
        <strain>FGSC A4 / ATCC 38163 / CBS 112.46 / NRRL 194 / M139</strain>
    </source>
</reference>
<reference key="3">
    <citation type="journal article" date="2009" name="Fungal Genet. Biol.">
        <title>The 2008 update of the Aspergillus nidulans genome annotation: a community effort.</title>
        <authorList>
            <person name="Wortman J.R."/>
            <person name="Gilsenan J.M."/>
            <person name="Joardar V."/>
            <person name="Deegan J."/>
            <person name="Clutterbuck J."/>
            <person name="Andersen M.R."/>
            <person name="Archer D."/>
            <person name="Bencina M."/>
            <person name="Braus G."/>
            <person name="Coutinho P."/>
            <person name="von Dohren H."/>
            <person name="Doonan J."/>
            <person name="Driessen A.J."/>
            <person name="Durek P."/>
            <person name="Espeso E."/>
            <person name="Fekete E."/>
            <person name="Flipphi M."/>
            <person name="Estrada C.G."/>
            <person name="Geysens S."/>
            <person name="Goldman G."/>
            <person name="de Groot P.W."/>
            <person name="Hansen K."/>
            <person name="Harris S.D."/>
            <person name="Heinekamp T."/>
            <person name="Helmstaedt K."/>
            <person name="Henrissat B."/>
            <person name="Hofmann G."/>
            <person name="Homan T."/>
            <person name="Horio T."/>
            <person name="Horiuchi H."/>
            <person name="James S."/>
            <person name="Jones M."/>
            <person name="Karaffa L."/>
            <person name="Karanyi Z."/>
            <person name="Kato M."/>
            <person name="Keller N."/>
            <person name="Kelly D.E."/>
            <person name="Kiel J.A."/>
            <person name="Kim J.M."/>
            <person name="van der Klei I.J."/>
            <person name="Klis F.M."/>
            <person name="Kovalchuk A."/>
            <person name="Krasevec N."/>
            <person name="Kubicek C.P."/>
            <person name="Liu B."/>
            <person name="Maccabe A."/>
            <person name="Meyer V."/>
            <person name="Mirabito P."/>
            <person name="Miskei M."/>
            <person name="Mos M."/>
            <person name="Mullins J."/>
            <person name="Nelson D.R."/>
            <person name="Nielsen J."/>
            <person name="Oakley B.R."/>
            <person name="Osmani S.A."/>
            <person name="Pakula T."/>
            <person name="Paszewski A."/>
            <person name="Paulsen I."/>
            <person name="Pilsyk S."/>
            <person name="Pocsi I."/>
            <person name="Punt P.J."/>
            <person name="Ram A.F."/>
            <person name="Ren Q."/>
            <person name="Robellet X."/>
            <person name="Robson G."/>
            <person name="Seiboth B."/>
            <person name="van Solingen P."/>
            <person name="Specht T."/>
            <person name="Sun J."/>
            <person name="Taheri-Talesh N."/>
            <person name="Takeshita N."/>
            <person name="Ussery D."/>
            <person name="vanKuyk P.A."/>
            <person name="Visser H."/>
            <person name="van de Vondervoort P.J."/>
            <person name="de Vries R.P."/>
            <person name="Walton J."/>
            <person name="Xiang X."/>
            <person name="Xiong Y."/>
            <person name="Zeng A.P."/>
            <person name="Brandt B.W."/>
            <person name="Cornell M.J."/>
            <person name="van den Hondel C.A."/>
            <person name="Visser J."/>
            <person name="Oliver S.G."/>
            <person name="Turner G."/>
        </authorList>
    </citation>
    <scope>GENOME REANNOTATION</scope>
    <source>
        <strain>FGSC A4 / ATCC 38163 / CBS 112.46 / NRRL 194 / M139</strain>
    </source>
</reference>
<accession>Q9Y7B6</accession>
<accession>C8VPD6</accession>
<accession>Q5BCF2</accession>
<protein>
    <recommendedName>
        <fullName>3-methyl-2-oxobutanoate hydroxymethyltransferase</fullName>
        <ecNumber evidence="1">2.1.2.11</ecNumber>
    </recommendedName>
    <alternativeName>
        <fullName>Ketopantoate hydroxymethyltransferase</fullName>
    </alternativeName>
</protein>
<keyword id="KW-0566">Pantothenate biosynthesis</keyword>
<keyword id="KW-1185">Reference proteome</keyword>
<keyword id="KW-0808">Transferase</keyword>
<name>PANB_EMENI</name>
<sequence length="349" mass="37643">MTFLRIATKRAIYLHRPANPALPTSSILPVLHSTNVATRVPSPCAIRHSSHSPLGAAQANPRKKVTMQTLRNLYKKGEPITMLTAHDFPSAHVADAAGMDMILVGDSLAMVALGMQDTSEVTLDDMLVHCRSVARAAQSAFTVSDLPMGSYEVSPEQALQSAIRIVKEGRVQGVKLEGGEEMAPAIKRITTAGIPVVGHIGLTPQRQNALGGFRVQGKSTTDALKLLKDALAVQEAGAFMIVIEAVPPEIASIVTQKLSVPTIGIGAGNGCSGQVLVQIDMTGNFPPGRFLPKFVKQYANVWNEALQGIQQYREEVKSRAYPAEQHTYPIPKEELVEFQKAVDELPEEK</sequence>
<dbReference type="EC" id="2.1.2.11" evidence="1"/>
<dbReference type="EMBL" id="AF134703">
    <property type="protein sequence ID" value="AAD37248.1"/>
    <property type="molecule type" value="Genomic_DNA"/>
</dbReference>
<dbReference type="EMBL" id="AACD01000028">
    <property type="protein sequence ID" value="EAA63954.1"/>
    <property type="molecule type" value="Genomic_DNA"/>
</dbReference>
<dbReference type="EMBL" id="BN001307">
    <property type="protein sequence ID" value="CBF85545.1"/>
    <property type="molecule type" value="Genomic_DNA"/>
</dbReference>
<dbReference type="PIR" id="T50553">
    <property type="entry name" value="T50553"/>
</dbReference>
<dbReference type="RefSeq" id="XP_659382.1">
    <property type="nucleotide sequence ID" value="XM_654290.1"/>
</dbReference>
<dbReference type="SMR" id="Q9Y7B6"/>
<dbReference type="FunCoup" id="Q9Y7B6">
    <property type="interactions" value="147"/>
</dbReference>
<dbReference type="STRING" id="227321.Q9Y7B6"/>
<dbReference type="EnsemblFungi" id="CBF85545">
    <property type="protein sequence ID" value="CBF85545"/>
    <property type="gene ID" value="ANIA_01778"/>
</dbReference>
<dbReference type="KEGG" id="ani:ANIA_01778"/>
<dbReference type="VEuPathDB" id="FungiDB:AN1778"/>
<dbReference type="eggNOG" id="KOG2949">
    <property type="taxonomic scope" value="Eukaryota"/>
</dbReference>
<dbReference type="HOGENOM" id="CLU_036645_0_1_1"/>
<dbReference type="InParanoid" id="Q9Y7B6"/>
<dbReference type="OMA" id="VLVWTDM"/>
<dbReference type="OrthoDB" id="425211at2759"/>
<dbReference type="BRENDA" id="2.1.2.11">
    <property type="organism ID" value="517"/>
</dbReference>
<dbReference type="UniPathway" id="UPA00028">
    <property type="reaction ID" value="UER00003"/>
</dbReference>
<dbReference type="Proteomes" id="UP000000560">
    <property type="component" value="Chromosome VII"/>
</dbReference>
<dbReference type="GO" id="GO:0005739">
    <property type="term" value="C:mitochondrion"/>
    <property type="evidence" value="ECO:0000318"/>
    <property type="project" value="GO_Central"/>
</dbReference>
<dbReference type="GO" id="GO:0003864">
    <property type="term" value="F:3-methyl-2-oxobutanoate hydroxymethyltransferase activity"/>
    <property type="evidence" value="ECO:0000314"/>
    <property type="project" value="AspGD"/>
</dbReference>
<dbReference type="GO" id="GO:0000287">
    <property type="term" value="F:magnesium ion binding"/>
    <property type="evidence" value="ECO:0000318"/>
    <property type="project" value="GO_Central"/>
</dbReference>
<dbReference type="GO" id="GO:0015940">
    <property type="term" value="P:pantothenate biosynthetic process"/>
    <property type="evidence" value="ECO:0000314"/>
    <property type="project" value="AspGD"/>
</dbReference>
<dbReference type="CDD" id="cd06557">
    <property type="entry name" value="KPHMT-like"/>
    <property type="match status" value="1"/>
</dbReference>
<dbReference type="FunFam" id="3.20.20.60:FF:000003">
    <property type="entry name" value="3-methyl-2-oxobutanoate hydroxymethyltransferase"/>
    <property type="match status" value="1"/>
</dbReference>
<dbReference type="Gene3D" id="3.20.20.60">
    <property type="entry name" value="Phosphoenolpyruvate-binding domains"/>
    <property type="match status" value="1"/>
</dbReference>
<dbReference type="HAMAP" id="MF_00156">
    <property type="entry name" value="PanB"/>
    <property type="match status" value="1"/>
</dbReference>
<dbReference type="InterPro" id="IPR003700">
    <property type="entry name" value="Pantoate_hydroxy_MeTrfase"/>
</dbReference>
<dbReference type="InterPro" id="IPR015813">
    <property type="entry name" value="Pyrv/PenolPyrv_kinase-like_dom"/>
</dbReference>
<dbReference type="InterPro" id="IPR040442">
    <property type="entry name" value="Pyrv_kinase-like_dom_sf"/>
</dbReference>
<dbReference type="NCBIfam" id="TIGR00222">
    <property type="entry name" value="panB"/>
    <property type="match status" value="1"/>
</dbReference>
<dbReference type="NCBIfam" id="NF001452">
    <property type="entry name" value="PRK00311.1"/>
    <property type="match status" value="1"/>
</dbReference>
<dbReference type="PANTHER" id="PTHR20881">
    <property type="entry name" value="3-METHYL-2-OXOBUTANOATE HYDROXYMETHYLTRANSFERASE"/>
    <property type="match status" value="1"/>
</dbReference>
<dbReference type="PANTHER" id="PTHR20881:SF0">
    <property type="entry name" value="3-METHYL-2-OXOBUTANOATE HYDROXYMETHYLTRANSFERASE"/>
    <property type="match status" value="1"/>
</dbReference>
<dbReference type="Pfam" id="PF02548">
    <property type="entry name" value="Pantoate_transf"/>
    <property type="match status" value="1"/>
</dbReference>
<dbReference type="SUPFAM" id="SSF51621">
    <property type="entry name" value="Phosphoenolpyruvate/pyruvate domain"/>
    <property type="match status" value="1"/>
</dbReference>
<comment type="catalytic activity">
    <reaction evidence="1">
        <text>3-methyl-2-oxobutanoate + (6R)-5,10-methylene-5,6,7,8-tetrahydrofolate + H2O = 2-dehydropantoate + (6S)-5,6,7,8-tetrahydrofolate</text>
        <dbReference type="Rhea" id="RHEA:11824"/>
        <dbReference type="ChEBI" id="CHEBI:11561"/>
        <dbReference type="ChEBI" id="CHEBI:11851"/>
        <dbReference type="ChEBI" id="CHEBI:15377"/>
        <dbReference type="ChEBI" id="CHEBI:15636"/>
        <dbReference type="ChEBI" id="CHEBI:57453"/>
        <dbReference type="EC" id="2.1.2.11"/>
    </reaction>
</comment>
<comment type="pathway">
    <text>Cofactor biosynthesis; (R)-pantothenate biosynthesis; (R)-pantoate from 3-methyl-2-oxobutanoate: step 1/2.</text>
</comment>
<comment type="similarity">
    <text evidence="2">Belongs to the PanB family.</text>
</comment>
<evidence type="ECO:0000269" key="1">
    <source>
    </source>
</evidence>
<evidence type="ECO:0000305" key="2"/>